<name>RL28_SYNSC</name>
<evidence type="ECO:0000255" key="1">
    <source>
        <dbReference type="HAMAP-Rule" id="MF_00373"/>
    </source>
</evidence>
<evidence type="ECO:0000305" key="2"/>
<accession>Q3AJS3</accession>
<gene>
    <name evidence="1" type="primary">rpmB</name>
    <name evidence="1" type="synonym">rpl28</name>
    <name type="ordered locus">Syncc9605_1405</name>
</gene>
<organism>
    <name type="scientific">Synechococcus sp. (strain CC9605)</name>
    <dbReference type="NCBI Taxonomy" id="110662"/>
    <lineage>
        <taxon>Bacteria</taxon>
        <taxon>Bacillati</taxon>
        <taxon>Cyanobacteriota</taxon>
        <taxon>Cyanophyceae</taxon>
        <taxon>Synechococcales</taxon>
        <taxon>Synechococcaceae</taxon>
        <taxon>Synechococcus</taxon>
    </lineage>
</organism>
<sequence length="78" mass="8856">MSRVCQLTGTRANNGMAVSHSHIRTKKLQQANLQQRRLWWAEGNRWVKLRVTTRALKTIQKKGLGAYAKSLGINLAKI</sequence>
<protein>
    <recommendedName>
        <fullName evidence="1">Large ribosomal subunit protein bL28</fullName>
    </recommendedName>
    <alternativeName>
        <fullName evidence="2">50S ribosomal protein L28</fullName>
    </alternativeName>
</protein>
<comment type="similarity">
    <text evidence="1">Belongs to the bacterial ribosomal protein bL28 family.</text>
</comment>
<proteinExistence type="inferred from homology"/>
<dbReference type="EMBL" id="CP000110">
    <property type="protein sequence ID" value="ABB35159.1"/>
    <property type="molecule type" value="Genomic_DNA"/>
</dbReference>
<dbReference type="RefSeq" id="WP_006850205.1">
    <property type="nucleotide sequence ID" value="NC_007516.1"/>
</dbReference>
<dbReference type="SMR" id="Q3AJS3"/>
<dbReference type="STRING" id="110662.Syncc9605_1405"/>
<dbReference type="KEGG" id="syd:Syncc9605_1405"/>
<dbReference type="eggNOG" id="COG0227">
    <property type="taxonomic scope" value="Bacteria"/>
</dbReference>
<dbReference type="HOGENOM" id="CLU_064548_3_0_3"/>
<dbReference type="OrthoDB" id="9805609at2"/>
<dbReference type="GO" id="GO:1990904">
    <property type="term" value="C:ribonucleoprotein complex"/>
    <property type="evidence" value="ECO:0007669"/>
    <property type="project" value="UniProtKB-KW"/>
</dbReference>
<dbReference type="GO" id="GO:0005840">
    <property type="term" value="C:ribosome"/>
    <property type="evidence" value="ECO:0007669"/>
    <property type="project" value="UniProtKB-KW"/>
</dbReference>
<dbReference type="GO" id="GO:0003735">
    <property type="term" value="F:structural constituent of ribosome"/>
    <property type="evidence" value="ECO:0007669"/>
    <property type="project" value="InterPro"/>
</dbReference>
<dbReference type="GO" id="GO:0006412">
    <property type="term" value="P:translation"/>
    <property type="evidence" value="ECO:0007669"/>
    <property type="project" value="UniProtKB-UniRule"/>
</dbReference>
<dbReference type="Gene3D" id="2.30.170.40">
    <property type="entry name" value="Ribosomal protein L28/L24"/>
    <property type="match status" value="1"/>
</dbReference>
<dbReference type="HAMAP" id="MF_00373">
    <property type="entry name" value="Ribosomal_bL28"/>
    <property type="match status" value="1"/>
</dbReference>
<dbReference type="InterPro" id="IPR026569">
    <property type="entry name" value="Ribosomal_bL28"/>
</dbReference>
<dbReference type="InterPro" id="IPR034704">
    <property type="entry name" value="Ribosomal_bL28/bL31-like_sf"/>
</dbReference>
<dbReference type="InterPro" id="IPR001383">
    <property type="entry name" value="Ribosomal_bL28_bact-type"/>
</dbReference>
<dbReference type="InterPro" id="IPR037147">
    <property type="entry name" value="Ribosomal_bL28_sf"/>
</dbReference>
<dbReference type="NCBIfam" id="TIGR00009">
    <property type="entry name" value="L28"/>
    <property type="match status" value="1"/>
</dbReference>
<dbReference type="PANTHER" id="PTHR13528">
    <property type="entry name" value="39S RIBOSOMAL PROTEIN L28, MITOCHONDRIAL"/>
    <property type="match status" value="1"/>
</dbReference>
<dbReference type="PANTHER" id="PTHR13528:SF2">
    <property type="entry name" value="LARGE RIBOSOMAL SUBUNIT PROTEIN BL28M"/>
    <property type="match status" value="1"/>
</dbReference>
<dbReference type="Pfam" id="PF00830">
    <property type="entry name" value="Ribosomal_L28"/>
    <property type="match status" value="1"/>
</dbReference>
<dbReference type="SUPFAM" id="SSF143800">
    <property type="entry name" value="L28p-like"/>
    <property type="match status" value="1"/>
</dbReference>
<keyword id="KW-0687">Ribonucleoprotein</keyword>
<keyword id="KW-0689">Ribosomal protein</keyword>
<reference key="1">
    <citation type="submission" date="2005-07" db="EMBL/GenBank/DDBJ databases">
        <title>Complete sequence of Synechococcus sp. CC9605.</title>
        <authorList>
            <consortium name="US DOE Joint Genome Institute"/>
            <person name="Copeland A."/>
            <person name="Lucas S."/>
            <person name="Lapidus A."/>
            <person name="Barry K."/>
            <person name="Detter J.C."/>
            <person name="Glavina T."/>
            <person name="Hammon N."/>
            <person name="Israni S."/>
            <person name="Pitluck S."/>
            <person name="Schmutz J."/>
            <person name="Martinez M."/>
            <person name="Larimer F."/>
            <person name="Land M."/>
            <person name="Kyrpides N."/>
            <person name="Ivanova N."/>
            <person name="Richardson P."/>
        </authorList>
    </citation>
    <scope>NUCLEOTIDE SEQUENCE [LARGE SCALE GENOMIC DNA]</scope>
    <source>
        <strain>CC9605</strain>
    </source>
</reference>
<feature type="chain" id="PRO_1000007390" description="Large ribosomal subunit protein bL28">
    <location>
        <begin position="1"/>
        <end position="78"/>
    </location>
</feature>